<accession>A7ICB3</accession>
<keyword id="KW-0004">4Fe-4S</keyword>
<keyword id="KW-0963">Cytoplasm</keyword>
<keyword id="KW-1015">Disulfide bond</keyword>
<keyword id="KW-0408">Iron</keyword>
<keyword id="KW-0411">Iron-sulfur</keyword>
<keyword id="KW-0479">Metal-binding</keyword>
<keyword id="KW-0489">Methyltransferase</keyword>
<keyword id="KW-1185">Reference proteome</keyword>
<keyword id="KW-0698">rRNA processing</keyword>
<keyword id="KW-0949">S-adenosyl-L-methionine</keyword>
<keyword id="KW-0808">Transferase</keyword>
<keyword id="KW-0819">tRNA processing</keyword>
<comment type="function">
    <text evidence="1">Specifically methylates position 2 of adenine 2503 in 23S rRNA and position 2 of adenine 37 in tRNAs. m2A2503 modification seems to play a crucial role in the proofreading step occurring at the peptidyl transferase center and thus would serve to optimize ribosomal fidelity.</text>
</comment>
<comment type="catalytic activity">
    <reaction evidence="1">
        <text>adenosine(2503) in 23S rRNA + 2 reduced [2Fe-2S]-[ferredoxin] + 2 S-adenosyl-L-methionine = 2-methyladenosine(2503) in 23S rRNA + 5'-deoxyadenosine + L-methionine + 2 oxidized [2Fe-2S]-[ferredoxin] + S-adenosyl-L-homocysteine</text>
        <dbReference type="Rhea" id="RHEA:42916"/>
        <dbReference type="Rhea" id="RHEA-COMP:10000"/>
        <dbReference type="Rhea" id="RHEA-COMP:10001"/>
        <dbReference type="Rhea" id="RHEA-COMP:10152"/>
        <dbReference type="Rhea" id="RHEA-COMP:10282"/>
        <dbReference type="ChEBI" id="CHEBI:17319"/>
        <dbReference type="ChEBI" id="CHEBI:33737"/>
        <dbReference type="ChEBI" id="CHEBI:33738"/>
        <dbReference type="ChEBI" id="CHEBI:57844"/>
        <dbReference type="ChEBI" id="CHEBI:57856"/>
        <dbReference type="ChEBI" id="CHEBI:59789"/>
        <dbReference type="ChEBI" id="CHEBI:74411"/>
        <dbReference type="ChEBI" id="CHEBI:74497"/>
        <dbReference type="EC" id="2.1.1.192"/>
    </reaction>
</comment>
<comment type="catalytic activity">
    <reaction evidence="1">
        <text>adenosine(37) in tRNA + 2 reduced [2Fe-2S]-[ferredoxin] + 2 S-adenosyl-L-methionine = 2-methyladenosine(37) in tRNA + 5'-deoxyadenosine + L-methionine + 2 oxidized [2Fe-2S]-[ferredoxin] + S-adenosyl-L-homocysteine</text>
        <dbReference type="Rhea" id="RHEA:43332"/>
        <dbReference type="Rhea" id="RHEA-COMP:10000"/>
        <dbReference type="Rhea" id="RHEA-COMP:10001"/>
        <dbReference type="Rhea" id="RHEA-COMP:10162"/>
        <dbReference type="Rhea" id="RHEA-COMP:10485"/>
        <dbReference type="ChEBI" id="CHEBI:17319"/>
        <dbReference type="ChEBI" id="CHEBI:33737"/>
        <dbReference type="ChEBI" id="CHEBI:33738"/>
        <dbReference type="ChEBI" id="CHEBI:57844"/>
        <dbReference type="ChEBI" id="CHEBI:57856"/>
        <dbReference type="ChEBI" id="CHEBI:59789"/>
        <dbReference type="ChEBI" id="CHEBI:74411"/>
        <dbReference type="ChEBI" id="CHEBI:74497"/>
        <dbReference type="EC" id="2.1.1.192"/>
    </reaction>
</comment>
<comment type="cofactor">
    <cofactor evidence="1">
        <name>[4Fe-4S] cluster</name>
        <dbReference type="ChEBI" id="CHEBI:49883"/>
    </cofactor>
    <text evidence="1">Binds 1 [4Fe-4S] cluster. The cluster is coordinated with 3 cysteines and an exchangeable S-adenosyl-L-methionine.</text>
</comment>
<comment type="subcellular location">
    <subcellularLocation>
        <location evidence="1">Cytoplasm</location>
    </subcellularLocation>
</comment>
<comment type="miscellaneous">
    <text evidence="1">Reaction proceeds by a ping-pong mechanism involving intermediate methylation of a conserved cysteine residue.</text>
</comment>
<comment type="similarity">
    <text evidence="1">Belongs to the radical SAM superfamily. RlmN family.</text>
</comment>
<sequence>MMSTPETATEATAPEAAPAPSLGADAPAPLPSLIGLDRDKLGAALDAIGVRGSDRRMRVNQLWHWIYLRGATDFAEMTNVSKHLRADLAAAYSLARPEIVMEQVSQDGTRKWLLRFPADHPGERPHDIETVYIPESDRGTLCVSSQVGCTLNCSFCHTGTQRLVRNLTAAEIVAQVMVARDRLGDYPGRDRATGPGLPTEGDRLVTNIVFMGMGEPLYAYDSVKEAIETLSDGDGLGLGKRRITVSTSGVVPEIERLGAEVGPMLAISLHAVRDKLRDELVPINKKYPIAELMEACRTYPAASNAKRITFEYVMLKGVNDSPADARALVKLLEGVPAKINLIPFNPWPGTQYECSDWETIERFSDIVFRAGYASPVRTPRGRDILAACGQLKSESEKLSARERLALRAMMAQDE</sequence>
<feature type="chain" id="PRO_0000350524" description="Dual-specificity RNA methyltransferase RlmN">
    <location>
        <begin position="1"/>
        <end position="414"/>
    </location>
</feature>
<feature type="domain" description="Radical SAM core" evidence="2">
    <location>
        <begin position="135"/>
        <end position="385"/>
    </location>
</feature>
<feature type="region of interest" description="Disordered" evidence="3">
    <location>
        <begin position="1"/>
        <end position="24"/>
    </location>
</feature>
<feature type="compositionally biased region" description="Low complexity" evidence="3">
    <location>
        <begin position="1"/>
        <end position="20"/>
    </location>
</feature>
<feature type="active site" description="Proton acceptor" evidence="1">
    <location>
        <position position="129"/>
    </location>
</feature>
<feature type="active site" description="S-methylcysteine intermediate" evidence="1">
    <location>
        <position position="388"/>
    </location>
</feature>
<feature type="binding site" evidence="1">
    <location>
        <position position="149"/>
    </location>
    <ligand>
        <name>[4Fe-4S] cluster</name>
        <dbReference type="ChEBI" id="CHEBI:49883"/>
        <note>4Fe-4S-S-AdoMet</note>
    </ligand>
</feature>
<feature type="binding site" evidence="1">
    <location>
        <position position="153"/>
    </location>
    <ligand>
        <name>[4Fe-4S] cluster</name>
        <dbReference type="ChEBI" id="CHEBI:49883"/>
        <note>4Fe-4S-S-AdoMet</note>
    </ligand>
</feature>
<feature type="binding site" evidence="1">
    <location>
        <position position="156"/>
    </location>
    <ligand>
        <name>[4Fe-4S] cluster</name>
        <dbReference type="ChEBI" id="CHEBI:49883"/>
        <note>4Fe-4S-S-AdoMet</note>
    </ligand>
</feature>
<feature type="binding site" evidence="1">
    <location>
        <begin position="214"/>
        <end position="215"/>
    </location>
    <ligand>
        <name>S-adenosyl-L-methionine</name>
        <dbReference type="ChEBI" id="CHEBI:59789"/>
    </ligand>
</feature>
<feature type="binding site" evidence="1">
    <location>
        <position position="246"/>
    </location>
    <ligand>
        <name>S-adenosyl-L-methionine</name>
        <dbReference type="ChEBI" id="CHEBI:59789"/>
    </ligand>
</feature>
<feature type="binding site" evidence="1">
    <location>
        <begin position="268"/>
        <end position="270"/>
    </location>
    <ligand>
        <name>S-adenosyl-L-methionine</name>
        <dbReference type="ChEBI" id="CHEBI:59789"/>
    </ligand>
</feature>
<feature type="binding site" evidence="1">
    <location>
        <position position="345"/>
    </location>
    <ligand>
        <name>S-adenosyl-L-methionine</name>
        <dbReference type="ChEBI" id="CHEBI:59789"/>
    </ligand>
</feature>
<feature type="disulfide bond" description="(transient)" evidence="1">
    <location>
        <begin position="142"/>
        <end position="388"/>
    </location>
</feature>
<name>RLMN_XANP2</name>
<proteinExistence type="inferred from homology"/>
<evidence type="ECO:0000255" key="1">
    <source>
        <dbReference type="HAMAP-Rule" id="MF_01849"/>
    </source>
</evidence>
<evidence type="ECO:0000255" key="2">
    <source>
        <dbReference type="PROSITE-ProRule" id="PRU01266"/>
    </source>
</evidence>
<evidence type="ECO:0000256" key="3">
    <source>
        <dbReference type="SAM" id="MobiDB-lite"/>
    </source>
</evidence>
<reference key="1">
    <citation type="submission" date="2007-07" db="EMBL/GenBank/DDBJ databases">
        <title>Complete sequence of chromosome of Xanthobacter autotrophicus Py2.</title>
        <authorList>
            <consortium name="US DOE Joint Genome Institute"/>
            <person name="Copeland A."/>
            <person name="Lucas S."/>
            <person name="Lapidus A."/>
            <person name="Barry K."/>
            <person name="Glavina del Rio T."/>
            <person name="Hammon N."/>
            <person name="Israni S."/>
            <person name="Dalin E."/>
            <person name="Tice H."/>
            <person name="Pitluck S."/>
            <person name="Sims D."/>
            <person name="Brettin T."/>
            <person name="Bruce D."/>
            <person name="Detter J.C."/>
            <person name="Han C."/>
            <person name="Tapia R."/>
            <person name="Brainard J."/>
            <person name="Schmutz J."/>
            <person name="Larimer F."/>
            <person name="Land M."/>
            <person name="Hauser L."/>
            <person name="Kyrpides N."/>
            <person name="Kim E."/>
            <person name="Ensigns S.A."/>
            <person name="Richardson P."/>
        </authorList>
    </citation>
    <scope>NUCLEOTIDE SEQUENCE [LARGE SCALE GENOMIC DNA]</scope>
    <source>
        <strain>ATCC BAA-1158 / Py2</strain>
    </source>
</reference>
<protein>
    <recommendedName>
        <fullName evidence="1">Dual-specificity RNA methyltransferase RlmN</fullName>
        <ecNumber evidence="1">2.1.1.192</ecNumber>
    </recommendedName>
    <alternativeName>
        <fullName evidence="1">23S rRNA (adenine(2503)-C(2))-methyltransferase</fullName>
    </alternativeName>
    <alternativeName>
        <fullName evidence="1">23S rRNA m2A2503 methyltransferase</fullName>
    </alternativeName>
    <alternativeName>
        <fullName evidence="1">Ribosomal RNA large subunit methyltransferase N</fullName>
    </alternativeName>
    <alternativeName>
        <fullName evidence="1">tRNA (adenine(37)-C(2))-methyltransferase</fullName>
    </alternativeName>
    <alternativeName>
        <fullName evidence="1">tRNA m2A37 methyltransferase</fullName>
    </alternativeName>
</protein>
<organism>
    <name type="scientific">Xanthobacter autotrophicus (strain ATCC BAA-1158 / Py2)</name>
    <dbReference type="NCBI Taxonomy" id="78245"/>
    <lineage>
        <taxon>Bacteria</taxon>
        <taxon>Pseudomonadati</taxon>
        <taxon>Pseudomonadota</taxon>
        <taxon>Alphaproteobacteria</taxon>
        <taxon>Hyphomicrobiales</taxon>
        <taxon>Xanthobacteraceae</taxon>
        <taxon>Xanthobacter</taxon>
    </lineage>
</organism>
<dbReference type="EC" id="2.1.1.192" evidence="1"/>
<dbReference type="EMBL" id="CP000781">
    <property type="protein sequence ID" value="ABS65656.1"/>
    <property type="molecule type" value="Genomic_DNA"/>
</dbReference>
<dbReference type="SMR" id="A7ICB3"/>
<dbReference type="STRING" id="78245.Xaut_0398"/>
<dbReference type="KEGG" id="xau:Xaut_0398"/>
<dbReference type="eggNOG" id="COG0820">
    <property type="taxonomic scope" value="Bacteria"/>
</dbReference>
<dbReference type="HOGENOM" id="CLU_029101_0_0_5"/>
<dbReference type="OrthoDB" id="9793973at2"/>
<dbReference type="PhylomeDB" id="A7ICB3"/>
<dbReference type="Proteomes" id="UP000002417">
    <property type="component" value="Chromosome"/>
</dbReference>
<dbReference type="GO" id="GO:0005737">
    <property type="term" value="C:cytoplasm"/>
    <property type="evidence" value="ECO:0007669"/>
    <property type="project" value="UniProtKB-SubCell"/>
</dbReference>
<dbReference type="GO" id="GO:0051539">
    <property type="term" value="F:4 iron, 4 sulfur cluster binding"/>
    <property type="evidence" value="ECO:0007669"/>
    <property type="project" value="UniProtKB-UniRule"/>
</dbReference>
<dbReference type="GO" id="GO:0046872">
    <property type="term" value="F:metal ion binding"/>
    <property type="evidence" value="ECO:0007669"/>
    <property type="project" value="UniProtKB-KW"/>
</dbReference>
<dbReference type="GO" id="GO:0070040">
    <property type="term" value="F:rRNA (adenine(2503)-C2-)-methyltransferase activity"/>
    <property type="evidence" value="ECO:0007669"/>
    <property type="project" value="UniProtKB-UniRule"/>
</dbReference>
<dbReference type="GO" id="GO:0019843">
    <property type="term" value="F:rRNA binding"/>
    <property type="evidence" value="ECO:0007669"/>
    <property type="project" value="UniProtKB-UniRule"/>
</dbReference>
<dbReference type="GO" id="GO:0002935">
    <property type="term" value="F:tRNA (adenine(37)-C2)-methyltransferase activity"/>
    <property type="evidence" value="ECO:0007669"/>
    <property type="project" value="UniProtKB-UniRule"/>
</dbReference>
<dbReference type="GO" id="GO:0000049">
    <property type="term" value="F:tRNA binding"/>
    <property type="evidence" value="ECO:0007669"/>
    <property type="project" value="UniProtKB-UniRule"/>
</dbReference>
<dbReference type="GO" id="GO:0070475">
    <property type="term" value="P:rRNA base methylation"/>
    <property type="evidence" value="ECO:0007669"/>
    <property type="project" value="UniProtKB-UniRule"/>
</dbReference>
<dbReference type="GO" id="GO:0030488">
    <property type="term" value="P:tRNA methylation"/>
    <property type="evidence" value="ECO:0007669"/>
    <property type="project" value="UniProtKB-UniRule"/>
</dbReference>
<dbReference type="CDD" id="cd01335">
    <property type="entry name" value="Radical_SAM"/>
    <property type="match status" value="1"/>
</dbReference>
<dbReference type="FunFam" id="3.20.20.70:FF:000008">
    <property type="entry name" value="Dual-specificity RNA methyltransferase RlmN"/>
    <property type="match status" value="1"/>
</dbReference>
<dbReference type="Gene3D" id="1.10.150.530">
    <property type="match status" value="1"/>
</dbReference>
<dbReference type="Gene3D" id="3.20.20.70">
    <property type="entry name" value="Aldolase class I"/>
    <property type="match status" value="1"/>
</dbReference>
<dbReference type="HAMAP" id="MF_01849">
    <property type="entry name" value="RNA_methyltr_RlmN"/>
    <property type="match status" value="1"/>
</dbReference>
<dbReference type="InterPro" id="IPR013785">
    <property type="entry name" value="Aldolase_TIM"/>
</dbReference>
<dbReference type="InterPro" id="IPR040072">
    <property type="entry name" value="Methyltransferase_A"/>
</dbReference>
<dbReference type="InterPro" id="IPR048641">
    <property type="entry name" value="RlmN_N"/>
</dbReference>
<dbReference type="InterPro" id="IPR027492">
    <property type="entry name" value="RNA_MTrfase_RlmN"/>
</dbReference>
<dbReference type="InterPro" id="IPR004383">
    <property type="entry name" value="rRNA_lsu_MTrfase_RlmN/Cfr"/>
</dbReference>
<dbReference type="InterPro" id="IPR007197">
    <property type="entry name" value="rSAM"/>
</dbReference>
<dbReference type="NCBIfam" id="TIGR00048">
    <property type="entry name" value="rRNA_mod_RlmN"/>
    <property type="match status" value="1"/>
</dbReference>
<dbReference type="PANTHER" id="PTHR30544">
    <property type="entry name" value="23S RRNA METHYLTRANSFERASE"/>
    <property type="match status" value="1"/>
</dbReference>
<dbReference type="PANTHER" id="PTHR30544:SF5">
    <property type="entry name" value="RADICAL SAM CORE DOMAIN-CONTAINING PROTEIN"/>
    <property type="match status" value="1"/>
</dbReference>
<dbReference type="Pfam" id="PF04055">
    <property type="entry name" value="Radical_SAM"/>
    <property type="match status" value="1"/>
</dbReference>
<dbReference type="Pfam" id="PF21016">
    <property type="entry name" value="RlmN_N"/>
    <property type="match status" value="1"/>
</dbReference>
<dbReference type="PIRSF" id="PIRSF006004">
    <property type="entry name" value="CHP00048"/>
    <property type="match status" value="1"/>
</dbReference>
<dbReference type="SFLD" id="SFLDF00275">
    <property type="entry name" value="adenosine_C2_methyltransferase"/>
    <property type="match status" value="1"/>
</dbReference>
<dbReference type="SFLD" id="SFLDS00029">
    <property type="entry name" value="Radical_SAM"/>
    <property type="match status" value="1"/>
</dbReference>
<dbReference type="SUPFAM" id="SSF102114">
    <property type="entry name" value="Radical SAM enzymes"/>
    <property type="match status" value="1"/>
</dbReference>
<dbReference type="PROSITE" id="PS51918">
    <property type="entry name" value="RADICAL_SAM"/>
    <property type="match status" value="1"/>
</dbReference>
<gene>
    <name evidence="1" type="primary">rlmN</name>
    <name type="ordered locus">Xaut_0398</name>
</gene>